<protein>
    <recommendedName>
        <fullName evidence="6">Heat shock protein 21, chloroplastic</fullName>
    </recommendedName>
    <alternativeName>
        <fullName>25.3 kDa heat shock protein, chloroplastic</fullName>
        <shortName>AtHsp25.3</shortName>
    </alternativeName>
</protein>
<comment type="function">
    <text evidence="4">Chaperone protein required for seedling and chloroplast development under heat stress, probably by maintaining plastid-encoded RNA polymerase (PEP)-dependent transcription.</text>
</comment>
<comment type="subunit">
    <text evidence="4 5">Forms oligomeric structures: dodecameric arrangement of two trimer- of-dimer disks stabilized by the C-terminal tails, possibly through tail-to-tail interactions between the disks (PubMed:28325834). Interacts with PTAC5; the formed complex associates with the plastid-encoded RNA polymerase (PEP) complex not only during transcription initiation, but also during elongation and termination, and with a stronger efficiency in illuminated chloroplasts. Binds to promoter regions of PEP-dependent genes (PubMed:23922206).</text>
</comment>
<comment type="subcellular location">
    <subcellularLocation>
        <location evidence="4">Plastid</location>
        <location evidence="4">Chloroplast stroma</location>
        <location evidence="4">Chloroplast nucleoid</location>
    </subcellularLocation>
</comment>
<comment type="tissue specificity">
    <text evidence="4">Confined to pollen grains of budding flowers.</text>
</comment>
<comment type="induction">
    <text evidence="4">Highly induced in roots, stems, leaves, flowers and siliques after a heat shock at 30 degrees Celsius. Highly and quickly induced by heat stress during early seedling development.</text>
</comment>
<comment type="disruption phenotype">
    <text evidence="4">Ivory phenotype seedling under heat stress (30 degrees Celsius). Decrease in transcript levels of class I genes, but enhanced expression of class III genes (e.g. accD, rpoB and clpP) after heat shock.</text>
</comment>
<comment type="similarity">
    <text evidence="2">Belongs to the small heat shock protein (HSP20) family.</text>
</comment>
<comment type="sequence caution" evidence="7">
    <conflict type="erroneous termination">
        <sequence resource="EMBL-CDS" id="ABK28654"/>
    </conflict>
    <text>Extended C-terminus.</text>
</comment>
<name>HS25P_ARATH</name>
<reference key="1">
    <citation type="journal article" date="1991" name="Mol. Gen. Genet.">
        <title>Analysis of conserved domains identifies a unique structural feature of a chloroplast heat shock protein.</title>
        <authorList>
            <person name="Chen Q."/>
            <person name="Vierling E."/>
        </authorList>
    </citation>
    <scope>NUCLEOTIDE SEQUENCE [MRNA]</scope>
    <source>
        <strain>cv. Columbia</strain>
        <tissue>Leaf</tissue>
    </source>
</reference>
<reference key="2">
    <citation type="journal article" date="1991" name="Mol. Gen. Genet.">
        <authorList>
            <person name="Chen Q."/>
            <person name="Vierling E."/>
        </authorList>
    </citation>
    <scope>ERRATUM OF PUBMED:2038305</scope>
</reference>
<reference key="3">
    <citation type="journal article" date="1993" name="Mol. Gen. Genet.">
        <title>Poly(A) tail length of a heat shock protein RNA is increased by severe heat stress, but intron splicing is unaffected.</title>
        <authorList>
            <person name="Osteryoung K.W."/>
            <person name="Sundberg H."/>
            <person name="Vierling E."/>
        </authorList>
    </citation>
    <scope>NUCLEOTIDE SEQUENCE [GENOMIC DNA]</scope>
    <source>
        <strain>cv. Columbia</strain>
    </source>
</reference>
<reference key="4">
    <citation type="journal article" date="1999" name="Nature">
        <title>Sequence and analysis of chromosome 4 of the plant Arabidopsis thaliana.</title>
        <authorList>
            <person name="Mayer K.F.X."/>
            <person name="Schueller C."/>
            <person name="Wambutt R."/>
            <person name="Murphy G."/>
            <person name="Volckaert G."/>
            <person name="Pohl T."/>
            <person name="Duesterhoeft A."/>
            <person name="Stiekema W."/>
            <person name="Entian K.-D."/>
            <person name="Terryn N."/>
            <person name="Harris B."/>
            <person name="Ansorge W."/>
            <person name="Brandt P."/>
            <person name="Grivell L.A."/>
            <person name="Rieger M."/>
            <person name="Weichselgartner M."/>
            <person name="de Simone V."/>
            <person name="Obermaier B."/>
            <person name="Mache R."/>
            <person name="Mueller M."/>
            <person name="Kreis M."/>
            <person name="Delseny M."/>
            <person name="Puigdomenech P."/>
            <person name="Watson M."/>
            <person name="Schmidtheini T."/>
            <person name="Reichert B."/>
            <person name="Portetelle D."/>
            <person name="Perez-Alonso M."/>
            <person name="Boutry M."/>
            <person name="Bancroft I."/>
            <person name="Vos P."/>
            <person name="Hoheisel J."/>
            <person name="Zimmermann W."/>
            <person name="Wedler H."/>
            <person name="Ridley P."/>
            <person name="Langham S.-A."/>
            <person name="McCullagh B."/>
            <person name="Bilham L."/>
            <person name="Robben J."/>
            <person name="van der Schueren J."/>
            <person name="Grymonprez B."/>
            <person name="Chuang Y.-J."/>
            <person name="Vandenbussche F."/>
            <person name="Braeken M."/>
            <person name="Weltjens I."/>
            <person name="Voet M."/>
            <person name="Bastiaens I."/>
            <person name="Aert R."/>
            <person name="Defoor E."/>
            <person name="Weitzenegger T."/>
            <person name="Bothe G."/>
            <person name="Ramsperger U."/>
            <person name="Hilbert H."/>
            <person name="Braun M."/>
            <person name="Holzer E."/>
            <person name="Brandt A."/>
            <person name="Peters S."/>
            <person name="van Staveren M."/>
            <person name="Dirkse W."/>
            <person name="Mooijman P."/>
            <person name="Klein Lankhorst R."/>
            <person name="Rose M."/>
            <person name="Hauf J."/>
            <person name="Koetter P."/>
            <person name="Berneiser S."/>
            <person name="Hempel S."/>
            <person name="Feldpausch M."/>
            <person name="Lamberth S."/>
            <person name="Van den Daele H."/>
            <person name="De Keyser A."/>
            <person name="Buysshaert C."/>
            <person name="Gielen J."/>
            <person name="Villarroel R."/>
            <person name="De Clercq R."/>
            <person name="van Montagu M."/>
            <person name="Rogers J."/>
            <person name="Cronin A."/>
            <person name="Quail M.A."/>
            <person name="Bray-Allen S."/>
            <person name="Clark L."/>
            <person name="Doggett J."/>
            <person name="Hall S."/>
            <person name="Kay M."/>
            <person name="Lennard N."/>
            <person name="McLay K."/>
            <person name="Mayes R."/>
            <person name="Pettett A."/>
            <person name="Rajandream M.A."/>
            <person name="Lyne M."/>
            <person name="Benes V."/>
            <person name="Rechmann S."/>
            <person name="Borkova D."/>
            <person name="Bloecker H."/>
            <person name="Scharfe M."/>
            <person name="Grimm M."/>
            <person name="Loehnert T.-H."/>
            <person name="Dose S."/>
            <person name="de Haan M."/>
            <person name="Maarse A.C."/>
            <person name="Schaefer M."/>
            <person name="Mueller-Auer S."/>
            <person name="Gabel C."/>
            <person name="Fuchs M."/>
            <person name="Fartmann B."/>
            <person name="Granderath K."/>
            <person name="Dauner D."/>
            <person name="Herzl A."/>
            <person name="Neumann S."/>
            <person name="Argiriou A."/>
            <person name="Vitale D."/>
            <person name="Liguori R."/>
            <person name="Piravandi E."/>
            <person name="Massenet O."/>
            <person name="Quigley F."/>
            <person name="Clabauld G."/>
            <person name="Muendlein A."/>
            <person name="Felber R."/>
            <person name="Schnabl S."/>
            <person name="Hiller R."/>
            <person name="Schmidt W."/>
            <person name="Lecharny A."/>
            <person name="Aubourg S."/>
            <person name="Chefdor F."/>
            <person name="Cooke R."/>
            <person name="Berger C."/>
            <person name="Monfort A."/>
            <person name="Casacuberta E."/>
            <person name="Gibbons T."/>
            <person name="Weber N."/>
            <person name="Vandenbol M."/>
            <person name="Bargues M."/>
            <person name="Terol J."/>
            <person name="Torres A."/>
            <person name="Perez-Perez A."/>
            <person name="Purnelle B."/>
            <person name="Bent E."/>
            <person name="Johnson S."/>
            <person name="Tacon D."/>
            <person name="Jesse T."/>
            <person name="Heijnen L."/>
            <person name="Schwarz S."/>
            <person name="Scholler P."/>
            <person name="Heber S."/>
            <person name="Francs P."/>
            <person name="Bielke C."/>
            <person name="Frishman D."/>
            <person name="Haase D."/>
            <person name="Lemcke K."/>
            <person name="Mewes H.-W."/>
            <person name="Stocker S."/>
            <person name="Zaccaria P."/>
            <person name="Bevan M."/>
            <person name="Wilson R.K."/>
            <person name="de la Bastide M."/>
            <person name="Habermann K."/>
            <person name="Parnell L."/>
            <person name="Dedhia N."/>
            <person name="Gnoj L."/>
            <person name="Schutz K."/>
            <person name="Huang E."/>
            <person name="Spiegel L."/>
            <person name="Sekhon M."/>
            <person name="Murray J."/>
            <person name="Sheet P."/>
            <person name="Cordes M."/>
            <person name="Abu-Threideh J."/>
            <person name="Stoneking T."/>
            <person name="Kalicki J."/>
            <person name="Graves T."/>
            <person name="Harmon G."/>
            <person name="Edwards J."/>
            <person name="Latreille P."/>
            <person name="Courtney L."/>
            <person name="Cloud J."/>
            <person name="Abbott A."/>
            <person name="Scott K."/>
            <person name="Johnson D."/>
            <person name="Minx P."/>
            <person name="Bentley D."/>
            <person name="Fulton B."/>
            <person name="Miller N."/>
            <person name="Greco T."/>
            <person name="Kemp K."/>
            <person name="Kramer J."/>
            <person name="Fulton L."/>
            <person name="Mardis E."/>
            <person name="Dante M."/>
            <person name="Pepin K."/>
            <person name="Hillier L.W."/>
            <person name="Nelson J."/>
            <person name="Spieth J."/>
            <person name="Ryan E."/>
            <person name="Andrews S."/>
            <person name="Geisel C."/>
            <person name="Layman D."/>
            <person name="Du H."/>
            <person name="Ali J."/>
            <person name="Berghoff A."/>
            <person name="Jones K."/>
            <person name="Drone K."/>
            <person name="Cotton M."/>
            <person name="Joshu C."/>
            <person name="Antonoiu B."/>
            <person name="Zidanic M."/>
            <person name="Strong C."/>
            <person name="Sun H."/>
            <person name="Lamar B."/>
            <person name="Yordan C."/>
            <person name="Ma P."/>
            <person name="Zhong J."/>
            <person name="Preston R."/>
            <person name="Vil D."/>
            <person name="Shekher M."/>
            <person name="Matero A."/>
            <person name="Shah R."/>
            <person name="Swaby I.K."/>
            <person name="O'Shaughnessy A."/>
            <person name="Rodriguez M."/>
            <person name="Hoffman J."/>
            <person name="Till S."/>
            <person name="Granat S."/>
            <person name="Shohdy N."/>
            <person name="Hasegawa A."/>
            <person name="Hameed A."/>
            <person name="Lodhi M."/>
            <person name="Johnson A."/>
            <person name="Chen E."/>
            <person name="Marra M.A."/>
            <person name="Martienssen R."/>
            <person name="McCombie W.R."/>
        </authorList>
    </citation>
    <scope>NUCLEOTIDE SEQUENCE [LARGE SCALE GENOMIC DNA]</scope>
    <source>
        <strain>cv. Columbia</strain>
    </source>
</reference>
<reference key="5">
    <citation type="journal article" date="2017" name="Plant J.">
        <title>Araport11: a complete reannotation of the Arabidopsis thaliana reference genome.</title>
        <authorList>
            <person name="Cheng C.Y."/>
            <person name="Krishnakumar V."/>
            <person name="Chan A.P."/>
            <person name="Thibaud-Nissen F."/>
            <person name="Schobel S."/>
            <person name="Town C.D."/>
        </authorList>
    </citation>
    <scope>GENOME REANNOTATION</scope>
    <source>
        <strain>cv. Columbia</strain>
    </source>
</reference>
<reference key="6">
    <citation type="journal article" date="2002" name="Science">
        <title>Functional annotation of a full-length Arabidopsis cDNA collection.</title>
        <authorList>
            <person name="Seki M."/>
            <person name="Narusaka M."/>
            <person name="Kamiya A."/>
            <person name="Ishida J."/>
            <person name="Satou M."/>
            <person name="Sakurai T."/>
            <person name="Nakajima M."/>
            <person name="Enju A."/>
            <person name="Akiyama K."/>
            <person name="Oono Y."/>
            <person name="Muramatsu M."/>
            <person name="Hayashizaki Y."/>
            <person name="Kawai J."/>
            <person name="Carninci P."/>
            <person name="Itoh M."/>
            <person name="Ishii Y."/>
            <person name="Arakawa T."/>
            <person name="Shibata K."/>
            <person name="Shinagawa A."/>
            <person name="Shinozaki K."/>
        </authorList>
    </citation>
    <scope>NUCLEOTIDE SEQUENCE [LARGE SCALE MRNA]</scope>
    <source>
        <strain>cv. Columbia</strain>
    </source>
</reference>
<reference key="7">
    <citation type="journal article" date="2006" name="Plant Biotechnol. J.">
        <title>Simultaneous high-throughput recombinational cloning of open reading frames in closed and open configurations.</title>
        <authorList>
            <person name="Underwood B.A."/>
            <person name="Vanderhaeghen R."/>
            <person name="Whitford R."/>
            <person name="Town C.D."/>
            <person name="Hilson P."/>
        </authorList>
    </citation>
    <scope>NUCLEOTIDE SEQUENCE [LARGE SCALE MRNA]</scope>
    <source>
        <strain>cv. Columbia</strain>
    </source>
</reference>
<reference key="8">
    <citation type="journal article" date="2013" name="Plant Cell">
        <title>Chloroplast small heat shock protein HSP21 interacts with plastid nucleoid protein pTAC5 and is essential for chloroplast development in Arabidopsis under heat stress.</title>
        <authorList>
            <person name="Zhong L."/>
            <person name="Zhou W."/>
            <person name="Wang H."/>
            <person name="Ding S."/>
            <person name="Lu Q."/>
            <person name="Wen X."/>
            <person name="Peng L."/>
            <person name="Zhang L."/>
            <person name="Lu C."/>
        </authorList>
    </citation>
    <scope>FUNCTION</scope>
    <scope>DISRUPTION PHENOTYPE</scope>
    <scope>SUBCELLULAR LOCATION</scope>
    <scope>TISSUE SPECIFICITY</scope>
    <scope>INTERACTION WITH PTAC5</scope>
    <scope>INDUCTION BY HEAT SHOCK</scope>
    <source>
        <strain>cv. Columbia</strain>
    </source>
</reference>
<reference key="9">
    <citation type="journal article" date="2017" name="J. Biol. Chem.">
        <title>Structural model of dodecameric heat-shock protein Hsp21: Flexible N-terminal arms interact with client proteins while C-terminal tails maintain the dodecamer and chaperone activity.</title>
        <authorList>
            <person name="Rutsdottir G."/>
            <person name="Haermark J."/>
            <person name="Weide Y."/>
            <person name="Hebert H."/>
            <person name="Rasmussen M.I."/>
            <person name="Wernersson S."/>
            <person name="Respondek M."/>
            <person name="Akke M."/>
            <person name="Hojrup P."/>
            <person name="Koeck P.J.B."/>
            <person name="Soederberg C.A.G."/>
            <person name="Emanuelsson C."/>
        </authorList>
    </citation>
    <scope>STRUCTURE BY ELECTRON MICROSCOPY (10.00 ANGSTROMS) OF 85-227</scope>
    <scope>SUBUNIT</scope>
    <scope>MUTAGENESIS OF VAL-181</scope>
</reference>
<keyword id="KW-0002">3D-structure</keyword>
<keyword id="KW-0143">Chaperone</keyword>
<keyword id="KW-0150">Chloroplast</keyword>
<keyword id="KW-0934">Plastid</keyword>
<keyword id="KW-1185">Reference proteome</keyword>
<keyword id="KW-0346">Stress response</keyword>
<keyword id="KW-0804">Transcription</keyword>
<keyword id="KW-0805">Transcription regulation</keyword>
<keyword id="KW-0809">Transit peptide</keyword>
<feature type="transit peptide" description="Chloroplast" evidence="1">
    <location>
        <begin position="1"/>
        <end position="43"/>
    </location>
</feature>
<feature type="chain" id="PRO_0000013528" description="Heat shock protein 21, chloroplastic">
    <location>
        <begin position="44"/>
        <end position="227"/>
    </location>
</feature>
<feature type="domain" description="sHSP" evidence="2">
    <location>
        <begin position="120"/>
        <end position="227"/>
    </location>
</feature>
<feature type="region of interest" description="Disordered" evidence="3">
    <location>
        <begin position="14"/>
        <end position="75"/>
    </location>
</feature>
<feature type="compositionally biased region" description="Low complexity" evidence="3">
    <location>
        <begin position="14"/>
        <end position="34"/>
    </location>
</feature>
<feature type="compositionally biased region" description="Low complexity" evidence="3">
    <location>
        <begin position="56"/>
        <end position="65"/>
    </location>
</feature>
<feature type="mutagenesis site" description="Impaired dodecameric oligomer structures formation leading to reduced chaperone activity." evidence="5">
    <original>V</original>
    <variation>A</variation>
    <location>
        <position position="181"/>
    </location>
</feature>
<feature type="sequence conflict" description="In Ref. 6; BAC43654." evidence="7" ref="6">
    <original>S</original>
    <variation>P</variation>
    <location>
        <position position="24"/>
    </location>
</feature>
<organism>
    <name type="scientific">Arabidopsis thaliana</name>
    <name type="common">Mouse-ear cress</name>
    <dbReference type="NCBI Taxonomy" id="3702"/>
    <lineage>
        <taxon>Eukaryota</taxon>
        <taxon>Viridiplantae</taxon>
        <taxon>Streptophyta</taxon>
        <taxon>Embryophyta</taxon>
        <taxon>Tracheophyta</taxon>
        <taxon>Spermatophyta</taxon>
        <taxon>Magnoliopsida</taxon>
        <taxon>eudicotyledons</taxon>
        <taxon>Gunneridae</taxon>
        <taxon>Pentapetalae</taxon>
        <taxon>rosids</taxon>
        <taxon>malvids</taxon>
        <taxon>Brassicales</taxon>
        <taxon>Brassicaceae</taxon>
        <taxon>Camelineae</taxon>
        <taxon>Arabidopsis</taxon>
    </lineage>
</organism>
<sequence>MASTLSFAASALCSPLAPSPSVSSKSATPFSVSFPRKIPSRIRAQDQRENSIDVVQQGQQKGNQGSSVEKRPQQRLTMDVSPFGLLDPLSPMRTMRQMLDTMDRMFEDTMPVSGRNRGGSGVSEIRAPWDIKEEEHEIKMRFDMPGLSKEDVKISVEDNVLVIKGEQKKEDSDDSWSGRSVSSYGTRLQLPDNCEKDKIKAELKNGVLFITIPKTKVERKVIDVQIQ</sequence>
<proteinExistence type="evidence at protein level"/>
<accession>P31170</accession>
<accession>A0MFA3</accession>
<accession>Q1PE43</accession>
<accession>Q6ZWL5</accession>
<dbReference type="EMBL" id="X54102">
    <property type="protein sequence ID" value="CAA38036.1"/>
    <property type="molecule type" value="mRNA"/>
</dbReference>
<dbReference type="EMBL" id="M94455">
    <property type="protein sequence ID" value="AAA32818.1"/>
    <property type="molecule type" value="Genomic_DNA"/>
</dbReference>
<dbReference type="EMBL" id="AL035602">
    <property type="protein sequence ID" value="CAB38279.1"/>
    <property type="molecule type" value="Genomic_DNA"/>
</dbReference>
<dbReference type="EMBL" id="AL161571">
    <property type="protein sequence ID" value="CAB81417.1"/>
    <property type="molecule type" value="Genomic_DNA"/>
</dbReference>
<dbReference type="EMBL" id="CP002687">
    <property type="protein sequence ID" value="AEE85379.1"/>
    <property type="molecule type" value="Genomic_DNA"/>
</dbReference>
<dbReference type="EMBL" id="AK119078">
    <property type="protein sequence ID" value="BAC43654.2"/>
    <property type="molecule type" value="mRNA"/>
</dbReference>
<dbReference type="EMBL" id="DQ446875">
    <property type="protein sequence ID" value="ABE66096.1"/>
    <property type="molecule type" value="mRNA"/>
</dbReference>
<dbReference type="EMBL" id="DQ653229">
    <property type="protein sequence ID" value="ABK28654.1"/>
    <property type="status" value="ALT_SEQ"/>
    <property type="molecule type" value="mRNA"/>
</dbReference>
<dbReference type="PIR" id="S35240">
    <property type="entry name" value="S35240"/>
</dbReference>
<dbReference type="RefSeq" id="NP_194497.1">
    <property type="nucleotide sequence ID" value="NM_118906.3"/>
</dbReference>
<dbReference type="PDB" id="5NMS">
    <property type="method" value="EM"/>
    <property type="resolution" value="10.00 A"/>
    <property type="chains" value="A/C/D/G/I/J=85-227, B/E/F/H/K/L=126-227"/>
</dbReference>
<dbReference type="PDB" id="7BZW">
    <property type="method" value="EM"/>
    <property type="resolution" value="4.60 A"/>
    <property type="chains" value="1/10/11/12/2/3/4/5/6/7/8/9=44-227"/>
</dbReference>
<dbReference type="PDB" id="7BZY">
    <property type="method" value="EM"/>
    <property type="resolution" value="3.70 A"/>
    <property type="chains" value="12=44-227"/>
</dbReference>
<dbReference type="PDBsum" id="5NMS"/>
<dbReference type="PDBsum" id="7BZW"/>
<dbReference type="PDBsum" id="7BZY"/>
<dbReference type="EMDB" id="EMD-30261"/>
<dbReference type="EMDB" id="EMD-30263"/>
<dbReference type="EMDB" id="EMD-3459"/>
<dbReference type="SMR" id="P31170"/>
<dbReference type="BioGRID" id="14168">
    <property type="interactions" value="3"/>
</dbReference>
<dbReference type="FunCoup" id="P31170">
    <property type="interactions" value="58"/>
</dbReference>
<dbReference type="STRING" id="3702.P31170"/>
<dbReference type="MetOSite" id="P31170"/>
<dbReference type="PaxDb" id="3702-AT4G27670.1"/>
<dbReference type="ProteomicsDB" id="230144"/>
<dbReference type="EnsemblPlants" id="AT4G27670.1">
    <property type="protein sequence ID" value="AT4G27670.1"/>
    <property type="gene ID" value="AT4G27670"/>
</dbReference>
<dbReference type="GeneID" id="828881"/>
<dbReference type="Gramene" id="AT4G27670.1">
    <property type="protein sequence ID" value="AT4G27670.1"/>
    <property type="gene ID" value="AT4G27670"/>
</dbReference>
<dbReference type="KEGG" id="ath:AT4G27670"/>
<dbReference type="Araport" id="AT4G27670"/>
<dbReference type="TAIR" id="AT4G27670">
    <property type="gene designation" value="HSP21"/>
</dbReference>
<dbReference type="eggNOG" id="KOG0710">
    <property type="taxonomic scope" value="Eukaryota"/>
</dbReference>
<dbReference type="HOGENOM" id="CLU_046737_3_0_1"/>
<dbReference type="InParanoid" id="P31170"/>
<dbReference type="OMA" id="TMRQMMD"/>
<dbReference type="PhylomeDB" id="P31170"/>
<dbReference type="PRO" id="PR:P31170"/>
<dbReference type="Proteomes" id="UP000006548">
    <property type="component" value="Chromosome 4"/>
</dbReference>
<dbReference type="ExpressionAtlas" id="P31170">
    <property type="expression patterns" value="baseline and differential"/>
</dbReference>
<dbReference type="GO" id="GO:0042644">
    <property type="term" value="C:chloroplast nucleoid"/>
    <property type="evidence" value="ECO:0000314"/>
    <property type="project" value="UniProtKB"/>
</dbReference>
<dbReference type="GO" id="GO:0101031">
    <property type="term" value="C:protein folding chaperone complex"/>
    <property type="evidence" value="ECO:0000315"/>
    <property type="project" value="UniProtKB"/>
</dbReference>
<dbReference type="GO" id="GO:0009658">
    <property type="term" value="P:chloroplast organization"/>
    <property type="evidence" value="ECO:0000315"/>
    <property type="project" value="UniProtKB"/>
</dbReference>
<dbReference type="GO" id="GO:0006355">
    <property type="term" value="P:regulation of DNA-templated transcription"/>
    <property type="evidence" value="ECO:0000315"/>
    <property type="project" value="UniProtKB"/>
</dbReference>
<dbReference type="GO" id="GO:0009408">
    <property type="term" value="P:response to heat"/>
    <property type="evidence" value="ECO:0000315"/>
    <property type="project" value="UniProtKB"/>
</dbReference>
<dbReference type="GO" id="GO:0009416">
    <property type="term" value="P:response to light stimulus"/>
    <property type="evidence" value="ECO:0000314"/>
    <property type="project" value="UniProtKB"/>
</dbReference>
<dbReference type="CDD" id="cd06464">
    <property type="entry name" value="ACD_sHsps-like"/>
    <property type="match status" value="1"/>
</dbReference>
<dbReference type="FunFam" id="2.60.40.790:FF:000059">
    <property type="entry name" value="26.5 kDa heat shock protein, mitochondrial"/>
    <property type="match status" value="1"/>
</dbReference>
<dbReference type="Gene3D" id="2.60.40.790">
    <property type="match status" value="1"/>
</dbReference>
<dbReference type="InterPro" id="IPR002068">
    <property type="entry name" value="A-crystallin/Hsp20_dom"/>
</dbReference>
<dbReference type="InterPro" id="IPR008978">
    <property type="entry name" value="HSP20-like_chaperone"/>
</dbReference>
<dbReference type="InterPro" id="IPR044587">
    <property type="entry name" value="HSP21-like"/>
</dbReference>
<dbReference type="PANTHER" id="PTHR46733">
    <property type="entry name" value="26.5 KDA HEAT SHOCK PROTEIN, MITOCHONDRIAL"/>
    <property type="match status" value="1"/>
</dbReference>
<dbReference type="PANTHER" id="PTHR46733:SF4">
    <property type="entry name" value="HEAT SHOCK PROTEIN 21, CHLOROPLASTIC"/>
    <property type="match status" value="1"/>
</dbReference>
<dbReference type="Pfam" id="PF00011">
    <property type="entry name" value="HSP20"/>
    <property type="match status" value="1"/>
</dbReference>
<dbReference type="SUPFAM" id="SSF49764">
    <property type="entry name" value="HSP20-like chaperones"/>
    <property type="match status" value="1"/>
</dbReference>
<dbReference type="PROSITE" id="PS01031">
    <property type="entry name" value="SHSP"/>
    <property type="match status" value="1"/>
</dbReference>
<gene>
    <name evidence="6" type="primary">HSP21</name>
    <name type="synonym">HSP25.3</name>
    <name evidence="8" type="ordered locus">At4g27670</name>
    <name evidence="9" type="ORF">T29A15.160</name>
</gene>
<evidence type="ECO:0000255" key="1"/>
<evidence type="ECO:0000255" key="2">
    <source>
        <dbReference type="PROSITE-ProRule" id="PRU00285"/>
    </source>
</evidence>
<evidence type="ECO:0000256" key="3">
    <source>
        <dbReference type="SAM" id="MobiDB-lite"/>
    </source>
</evidence>
<evidence type="ECO:0000269" key="4">
    <source>
    </source>
</evidence>
<evidence type="ECO:0000269" key="5">
    <source>
    </source>
</evidence>
<evidence type="ECO:0000303" key="6">
    <source>
    </source>
</evidence>
<evidence type="ECO:0000305" key="7"/>
<evidence type="ECO:0000312" key="8">
    <source>
        <dbReference type="Araport" id="AT4G27670"/>
    </source>
</evidence>
<evidence type="ECO:0000312" key="9">
    <source>
        <dbReference type="EMBL" id="CAB38279.1"/>
    </source>
</evidence>